<reference key="1">
    <citation type="journal article" date="1998" name="Glycobiology">
        <title>The expanding beta 4-galactosyltransferase gene family: messages from the databanks.</title>
        <authorList>
            <person name="Lo N.-W."/>
            <person name="Shaper J.H."/>
            <person name="Pevsner J."/>
            <person name="Shaper N.L."/>
        </authorList>
    </citation>
    <scope>NUCLEOTIDE SEQUENCE [MRNA]</scope>
</reference>
<reference key="2">
    <citation type="submission" date="1999-06" db="EMBL/GenBank/DDBJ databases">
        <title>Molecular cloning of mouse beta-1,4-galactosyltransferase 4.</title>
        <authorList>
            <person name="Schwientek T."/>
            <person name="Clausen H."/>
        </authorList>
    </citation>
    <scope>NUCLEOTIDE SEQUENCE [MRNA]</scope>
    <source>
        <tissue>Embryo</tissue>
    </source>
</reference>
<reference key="3">
    <citation type="journal article" date="2005" name="Science">
        <title>The transcriptional landscape of the mammalian genome.</title>
        <authorList>
            <person name="Carninci P."/>
            <person name="Kasukawa T."/>
            <person name="Katayama S."/>
            <person name="Gough J."/>
            <person name="Frith M.C."/>
            <person name="Maeda N."/>
            <person name="Oyama R."/>
            <person name="Ravasi T."/>
            <person name="Lenhard B."/>
            <person name="Wells C."/>
            <person name="Kodzius R."/>
            <person name="Shimokawa K."/>
            <person name="Bajic V.B."/>
            <person name="Brenner S.E."/>
            <person name="Batalov S."/>
            <person name="Forrest A.R."/>
            <person name="Zavolan M."/>
            <person name="Davis M.J."/>
            <person name="Wilming L.G."/>
            <person name="Aidinis V."/>
            <person name="Allen J.E."/>
            <person name="Ambesi-Impiombato A."/>
            <person name="Apweiler R."/>
            <person name="Aturaliya R.N."/>
            <person name="Bailey T.L."/>
            <person name="Bansal M."/>
            <person name="Baxter L."/>
            <person name="Beisel K.W."/>
            <person name="Bersano T."/>
            <person name="Bono H."/>
            <person name="Chalk A.M."/>
            <person name="Chiu K.P."/>
            <person name="Choudhary V."/>
            <person name="Christoffels A."/>
            <person name="Clutterbuck D.R."/>
            <person name="Crowe M.L."/>
            <person name="Dalla E."/>
            <person name="Dalrymple B.P."/>
            <person name="de Bono B."/>
            <person name="Della Gatta G."/>
            <person name="di Bernardo D."/>
            <person name="Down T."/>
            <person name="Engstrom P."/>
            <person name="Fagiolini M."/>
            <person name="Faulkner G."/>
            <person name="Fletcher C.F."/>
            <person name="Fukushima T."/>
            <person name="Furuno M."/>
            <person name="Futaki S."/>
            <person name="Gariboldi M."/>
            <person name="Georgii-Hemming P."/>
            <person name="Gingeras T.R."/>
            <person name="Gojobori T."/>
            <person name="Green R.E."/>
            <person name="Gustincich S."/>
            <person name="Harbers M."/>
            <person name="Hayashi Y."/>
            <person name="Hensch T.K."/>
            <person name="Hirokawa N."/>
            <person name="Hill D."/>
            <person name="Huminiecki L."/>
            <person name="Iacono M."/>
            <person name="Ikeo K."/>
            <person name="Iwama A."/>
            <person name="Ishikawa T."/>
            <person name="Jakt M."/>
            <person name="Kanapin A."/>
            <person name="Katoh M."/>
            <person name="Kawasawa Y."/>
            <person name="Kelso J."/>
            <person name="Kitamura H."/>
            <person name="Kitano H."/>
            <person name="Kollias G."/>
            <person name="Krishnan S.P."/>
            <person name="Kruger A."/>
            <person name="Kummerfeld S.K."/>
            <person name="Kurochkin I.V."/>
            <person name="Lareau L.F."/>
            <person name="Lazarevic D."/>
            <person name="Lipovich L."/>
            <person name="Liu J."/>
            <person name="Liuni S."/>
            <person name="McWilliam S."/>
            <person name="Madan Babu M."/>
            <person name="Madera M."/>
            <person name="Marchionni L."/>
            <person name="Matsuda H."/>
            <person name="Matsuzawa S."/>
            <person name="Miki H."/>
            <person name="Mignone F."/>
            <person name="Miyake S."/>
            <person name="Morris K."/>
            <person name="Mottagui-Tabar S."/>
            <person name="Mulder N."/>
            <person name="Nakano N."/>
            <person name="Nakauchi H."/>
            <person name="Ng P."/>
            <person name="Nilsson R."/>
            <person name="Nishiguchi S."/>
            <person name="Nishikawa S."/>
            <person name="Nori F."/>
            <person name="Ohara O."/>
            <person name="Okazaki Y."/>
            <person name="Orlando V."/>
            <person name="Pang K.C."/>
            <person name="Pavan W.J."/>
            <person name="Pavesi G."/>
            <person name="Pesole G."/>
            <person name="Petrovsky N."/>
            <person name="Piazza S."/>
            <person name="Reed J."/>
            <person name="Reid J.F."/>
            <person name="Ring B.Z."/>
            <person name="Ringwald M."/>
            <person name="Rost B."/>
            <person name="Ruan Y."/>
            <person name="Salzberg S.L."/>
            <person name="Sandelin A."/>
            <person name="Schneider C."/>
            <person name="Schoenbach C."/>
            <person name="Sekiguchi K."/>
            <person name="Semple C.A."/>
            <person name="Seno S."/>
            <person name="Sessa L."/>
            <person name="Sheng Y."/>
            <person name="Shibata Y."/>
            <person name="Shimada H."/>
            <person name="Shimada K."/>
            <person name="Silva D."/>
            <person name="Sinclair B."/>
            <person name="Sperling S."/>
            <person name="Stupka E."/>
            <person name="Sugiura K."/>
            <person name="Sultana R."/>
            <person name="Takenaka Y."/>
            <person name="Taki K."/>
            <person name="Tammoja K."/>
            <person name="Tan S.L."/>
            <person name="Tang S."/>
            <person name="Taylor M.S."/>
            <person name="Tegner J."/>
            <person name="Teichmann S.A."/>
            <person name="Ueda H.R."/>
            <person name="van Nimwegen E."/>
            <person name="Verardo R."/>
            <person name="Wei C.L."/>
            <person name="Yagi K."/>
            <person name="Yamanishi H."/>
            <person name="Zabarovsky E."/>
            <person name="Zhu S."/>
            <person name="Zimmer A."/>
            <person name="Hide W."/>
            <person name="Bult C."/>
            <person name="Grimmond S.M."/>
            <person name="Teasdale R.D."/>
            <person name="Liu E.T."/>
            <person name="Brusic V."/>
            <person name="Quackenbush J."/>
            <person name="Wahlestedt C."/>
            <person name="Mattick J.S."/>
            <person name="Hume D.A."/>
            <person name="Kai C."/>
            <person name="Sasaki D."/>
            <person name="Tomaru Y."/>
            <person name="Fukuda S."/>
            <person name="Kanamori-Katayama M."/>
            <person name="Suzuki M."/>
            <person name="Aoki J."/>
            <person name="Arakawa T."/>
            <person name="Iida J."/>
            <person name="Imamura K."/>
            <person name="Itoh M."/>
            <person name="Kato T."/>
            <person name="Kawaji H."/>
            <person name="Kawagashira N."/>
            <person name="Kawashima T."/>
            <person name="Kojima M."/>
            <person name="Kondo S."/>
            <person name="Konno H."/>
            <person name="Nakano K."/>
            <person name="Ninomiya N."/>
            <person name="Nishio T."/>
            <person name="Okada M."/>
            <person name="Plessy C."/>
            <person name="Shibata K."/>
            <person name="Shiraki T."/>
            <person name="Suzuki S."/>
            <person name="Tagami M."/>
            <person name="Waki K."/>
            <person name="Watahiki A."/>
            <person name="Okamura-Oho Y."/>
            <person name="Suzuki H."/>
            <person name="Kawai J."/>
            <person name="Hayashizaki Y."/>
        </authorList>
    </citation>
    <scope>NUCLEOTIDE SEQUENCE [LARGE SCALE MRNA]</scope>
    <source>
        <strain>C57BL/6J</strain>
        <tissue>Corpora quadrigemina</tissue>
        <tissue>Hippocampus</tissue>
        <tissue>Kidney</tissue>
        <tissue>Thymus</tissue>
    </source>
</reference>
<reference key="4">
    <citation type="journal article" date="2004" name="Genome Res.">
        <title>The status, quality, and expansion of the NIH full-length cDNA project: the Mammalian Gene Collection (MGC).</title>
        <authorList>
            <consortium name="The MGC Project Team"/>
        </authorList>
    </citation>
    <scope>NUCLEOTIDE SEQUENCE [LARGE SCALE MRNA]</scope>
    <source>
        <strain>FVB/N</strain>
        <tissue>Colon</tissue>
        <tissue>Mammary tumor</tissue>
    </source>
</reference>
<organism>
    <name type="scientific">Mus musculus</name>
    <name type="common">Mouse</name>
    <dbReference type="NCBI Taxonomy" id="10090"/>
    <lineage>
        <taxon>Eukaryota</taxon>
        <taxon>Metazoa</taxon>
        <taxon>Chordata</taxon>
        <taxon>Craniata</taxon>
        <taxon>Vertebrata</taxon>
        <taxon>Euteleostomi</taxon>
        <taxon>Mammalia</taxon>
        <taxon>Eutheria</taxon>
        <taxon>Euarchontoglires</taxon>
        <taxon>Glires</taxon>
        <taxon>Rodentia</taxon>
        <taxon>Myomorpha</taxon>
        <taxon>Muroidea</taxon>
        <taxon>Muridae</taxon>
        <taxon>Murinae</taxon>
        <taxon>Mus</taxon>
        <taxon>Mus</taxon>
    </lineage>
</organism>
<accession>Q9JJ04</accession>
<accession>Q8BR54</accession>
<accession>Q9QY12</accession>
<evidence type="ECO:0000250" key="1"/>
<evidence type="ECO:0000250" key="2">
    <source>
        <dbReference type="UniProtKB" id="O60513"/>
    </source>
</evidence>
<evidence type="ECO:0000255" key="3"/>
<evidence type="ECO:0000305" key="4"/>
<evidence type="ECO:0000312" key="5">
    <source>
        <dbReference type="MGI" id="MGI:1928387"/>
    </source>
</evidence>
<protein>
    <recommendedName>
        <fullName evidence="4">Beta-1,4-galactosyltransferase 4</fullName>
        <shortName>Beta-1,4-GalTase 4</shortName>
        <shortName>Beta4Gal-T4</shortName>
        <shortName>b4Gal-T4</shortName>
        <ecNumber evidence="2">2.4.1.-</ecNumber>
    </recommendedName>
    <alternativeName>
        <fullName>Beta-N-acetylglucosaminyl-glycolipid beta-1,4-galactosyltransferase</fullName>
    </alternativeName>
    <alternativeName>
        <fullName>Lactotriaosylceramide beta-1,4-galactosyltransferase</fullName>
        <ecNumber evidence="2">2.4.1.275</ecNumber>
    </alternativeName>
    <alternativeName>
        <fullName>N-acetyllactosamine synthase</fullName>
        <ecNumber evidence="2">2.4.1.90</ecNumber>
    </alternativeName>
    <alternativeName>
        <fullName>Nal synthase</fullName>
    </alternativeName>
    <alternativeName>
        <fullName>UDP-Gal:beta-GlcNAc beta-1,4-galactosyltransferase 4</fullName>
    </alternativeName>
    <alternativeName>
        <fullName>UDP-galactose:beta-N-acetylglucosamine beta-1,4-galactosyltransferase 4</fullName>
    </alternativeName>
</protein>
<comment type="function">
    <text evidence="2">Galactose (Gal) transferase involved in the synthesis of terminal N-acetyllactosamine (LacNac) unit present on glycan chains of glycoproteins and glycosphingolipids. Catalyzes the transfer of Gal residue via a beta1-&gt;4 linkage from UDP-Gal to the non-reducing terminal N-acetyl glucosamine 6-O-sulfate (6-O-sulfoGlcNAc) in the linearly growing chain of both N- and O-linked keratan sulfate proteoglycans. Cooperates with B3GNT7 N-acetyl glucosamine transferase and CHST6 and CHST1 sulfotransferases to construct and elongate mono- and disulfated disaccharide units [-&gt;3Galbeta1-&gt;4(6-sulfoGlcNAcbeta)1-&gt;] and [-&gt;3(6-sulfoGalbeta)1-&gt;4(6-sulfoGlcNAcbeta)1-&gt;] within keratan sulfate polymer. Transfers Gal residue via a beta1-&gt;4 linkage to terminal 6-O-sulfoGlcNAc within the LacNac unit of core 2 O-glycans forming 6-sulfo-sialyl-Lewis X (sLex). May contribute to the generation of sLex epitope on mucin-type glycoproteins that serve as ligands for SELL/L-selectin, a major regulator of leukocyte migration. In the biosynthesis pathway of neolacto-series glycosphingolipids, transfers Gal residue via a beta1-&gt;4 linkage to terminal GlcNAc of a lactotriaosylceramide (Lc3Cer) acceptor to form a neolactotetraosylceramide.</text>
</comment>
<comment type="catalytic activity">
    <reaction evidence="2">
        <text>N-acetyl-D-glucosamine + UDP-alpha-D-galactose = beta-D-galactosyl-(1-&gt;4)-N-acetyl-D-glucosamine + UDP + H(+)</text>
        <dbReference type="Rhea" id="RHEA:17745"/>
        <dbReference type="ChEBI" id="CHEBI:15378"/>
        <dbReference type="ChEBI" id="CHEBI:58223"/>
        <dbReference type="ChEBI" id="CHEBI:60152"/>
        <dbReference type="ChEBI" id="CHEBI:66914"/>
        <dbReference type="ChEBI" id="CHEBI:506227"/>
        <dbReference type="EC" id="2.4.1.90"/>
    </reaction>
    <physiologicalReaction direction="left-to-right" evidence="2">
        <dbReference type="Rhea" id="RHEA:17746"/>
    </physiologicalReaction>
</comment>
<comment type="catalytic activity">
    <reaction evidence="2">
        <text>a beta-D-GlcNAc-(1-&gt;3)-beta-D-Gal-(1-&gt;4)-beta-D-Glc-(1&lt;-&gt;1)-Cer(d18:1(4E)) + UDP-alpha-D-galactose = a neolactoside nLc4Cer(d18:1(4E)) + UDP + H(+)</text>
        <dbReference type="Rhea" id="RHEA:31499"/>
        <dbReference type="ChEBI" id="CHEBI:15378"/>
        <dbReference type="ChEBI" id="CHEBI:17006"/>
        <dbReference type="ChEBI" id="CHEBI:17103"/>
        <dbReference type="ChEBI" id="CHEBI:58223"/>
        <dbReference type="ChEBI" id="CHEBI:66914"/>
        <dbReference type="EC" id="2.4.1.275"/>
    </reaction>
    <physiologicalReaction direction="left-to-right" evidence="2">
        <dbReference type="Rhea" id="RHEA:31500"/>
    </physiologicalReaction>
</comment>
<comment type="catalytic activity">
    <reaction evidence="2">
        <text>3-O-{beta-D-galactosyl-(1-&gt;3)-[6-O-sulfo-N-acetyl-beta-D-glucosaminyl-(1-&gt;6)]-N-acetyl-alpha-D-galactosaminyl}-L-seryl-[protein] + UDP-alpha-D-galactose = 3-O-{beta-D-galactosyl-(1-&gt;3)-[beta-D-galactosyl-(1-&gt;4)-6-O-sulfo-N-acetyl-beta-D-glucosaminyl-(1-&gt;6)]-N-acetyl-alpha-D-galactosaminyl}-L-seryl-[protein] + UDP + H(+)</text>
        <dbReference type="Rhea" id="RHEA:67948"/>
        <dbReference type="Rhea" id="RHEA-COMP:17367"/>
        <dbReference type="Rhea" id="RHEA-COMP:17398"/>
        <dbReference type="ChEBI" id="CHEBI:15378"/>
        <dbReference type="ChEBI" id="CHEBI:58223"/>
        <dbReference type="ChEBI" id="CHEBI:66914"/>
        <dbReference type="ChEBI" id="CHEBI:176494"/>
        <dbReference type="ChEBI" id="CHEBI:176635"/>
    </reaction>
    <physiologicalReaction direction="left-to-right" evidence="2">
        <dbReference type="Rhea" id="RHEA:67949"/>
    </physiologicalReaction>
</comment>
<comment type="catalytic activity">
    <reaction evidence="2">
        <text>3-O-{beta-D-galactosyl-(1-&gt;3)-[6-O-sulfo-N-acetyl-beta-D-glucosaminyl-(1-&gt;6)]-N-acetyl-alpha-D-galactosaminyl}-L-threonyl-[protein] + UDP-alpha-D-galactose = 3-O-{beta-D-galactosyl-(1-&gt;3)-[beta-D-galactosyl-(1-&gt;4)-6-O-sulfo-N-acetyl-beta-D-glucosaminyl-(1-&gt;6)]-N-acetyl-alpha-D-galactosaminyl}-L-threonyl-[protein] + UDP + H(+)</text>
        <dbReference type="Rhea" id="RHEA:67872"/>
        <dbReference type="Rhea" id="RHEA-COMP:17370"/>
        <dbReference type="Rhea" id="RHEA-COMP:17397"/>
        <dbReference type="ChEBI" id="CHEBI:15378"/>
        <dbReference type="ChEBI" id="CHEBI:58223"/>
        <dbReference type="ChEBI" id="CHEBI:66914"/>
        <dbReference type="ChEBI" id="CHEBI:176493"/>
        <dbReference type="ChEBI" id="CHEBI:176634"/>
    </reaction>
    <physiologicalReaction direction="left-to-right" evidence="2">
        <dbReference type="Rhea" id="RHEA:67873"/>
    </physiologicalReaction>
</comment>
<comment type="cofactor">
    <cofactor evidence="1">
        <name>Mn(2+)</name>
        <dbReference type="ChEBI" id="CHEBI:29035"/>
    </cofactor>
</comment>
<comment type="pathway">
    <text evidence="2">Protein modification; protein glycosylation.</text>
</comment>
<comment type="pathway">
    <text evidence="2">Glycolipid biosynthesis.</text>
</comment>
<comment type="subunit">
    <text evidence="2">Interacts with SLC35A2/UGT1.</text>
</comment>
<comment type="subcellular location">
    <subcellularLocation>
        <location evidence="2">Golgi apparatus membrane</location>
        <topology evidence="3">Single-pass type II membrane protein</topology>
    </subcellularLocation>
    <subcellularLocation>
        <location evidence="2">Secreted</location>
    </subcellularLocation>
</comment>
<comment type="similarity">
    <text evidence="4">Belongs to the glycosyltransferase 7 family.</text>
</comment>
<comment type="sequence caution" evidence="4">
    <conflict type="frameshift">
        <sequence resource="EMBL-CDS" id="BAC32433"/>
    </conflict>
</comment>
<comment type="online information" name="Functional Glycomics Gateway - GTase">
    <link uri="http://www.functionalglycomics.org/glycomics/molecule/jsp/glycoEnzyme/viewGlycoEnzyme.jsp?gbpId=gt_mou_463"/>
    <text>b4GalT4</text>
</comment>
<name>B4GT4_MOUSE</name>
<gene>
    <name evidence="5" type="primary">B4galt4</name>
</gene>
<keyword id="KW-1015">Disulfide bond</keyword>
<keyword id="KW-0325">Glycoprotein</keyword>
<keyword id="KW-0328">Glycosyltransferase</keyword>
<keyword id="KW-0333">Golgi apparatus</keyword>
<keyword id="KW-0443">Lipid metabolism</keyword>
<keyword id="KW-0464">Manganese</keyword>
<keyword id="KW-0472">Membrane</keyword>
<keyword id="KW-0479">Metal-binding</keyword>
<keyword id="KW-1185">Reference proteome</keyword>
<keyword id="KW-0964">Secreted</keyword>
<keyword id="KW-0735">Signal-anchor</keyword>
<keyword id="KW-0808">Transferase</keyword>
<keyword id="KW-0812">Transmembrane</keyword>
<keyword id="KW-1133">Transmembrane helix</keyword>
<proteinExistence type="evidence at transcript level"/>
<sequence length="344" mass="39700">MGCNPPYHLSYRLRLLLLFTLCLTVVGWATSNYFVGAIQVIPKAKDFMASFHKVIHLGNEETLGHDGATKKPELANCPSVSPNLRGQSKLVFKPDLTLEEIEAENPKVSRGRYHPEECKALQRVAILIPHRNREKHLIYLLEHLHPFLQRQQLDYGIYIIHQTGSKKFNRAKLLNVGYLEALKEENWDCFVFHDVDLVPENDFNLYTCGDQPKHLVVGRNSTGYRLRYSKYFGGVTALSREQFLKVNGFSNNYWGWGGEDDDLRLRVELHKMKISRPKPDVGKYTMIFHTRDKGNEVNMGRMKLLQQMSRVWKTDGLSSCSYRLLSVEHNPLYANITVDFWTAA</sequence>
<dbReference type="EC" id="2.4.1.-" evidence="2"/>
<dbReference type="EC" id="2.4.1.275" evidence="2"/>
<dbReference type="EC" id="2.4.1.90" evidence="2"/>
<dbReference type="EMBL" id="AF142672">
    <property type="protein sequence ID" value="AAF22222.1"/>
    <property type="molecule type" value="mRNA"/>
</dbReference>
<dbReference type="EMBL" id="AF158746">
    <property type="protein sequence ID" value="AAF80363.1"/>
    <property type="molecule type" value="mRNA"/>
</dbReference>
<dbReference type="EMBL" id="AK041692">
    <property type="protein sequence ID" value="BAC31035.1"/>
    <property type="molecule type" value="mRNA"/>
</dbReference>
<dbReference type="EMBL" id="AK045602">
    <property type="protein sequence ID" value="BAC32433.1"/>
    <property type="status" value="ALT_FRAME"/>
    <property type="molecule type" value="mRNA"/>
</dbReference>
<dbReference type="EMBL" id="AK050005">
    <property type="protein sequence ID" value="BAC34028.1"/>
    <property type="molecule type" value="mRNA"/>
</dbReference>
<dbReference type="EMBL" id="AK052013">
    <property type="protein sequence ID" value="BAC34832.1"/>
    <property type="molecule type" value="mRNA"/>
</dbReference>
<dbReference type="EMBL" id="AK053603">
    <property type="protein sequence ID" value="BAC35443.1"/>
    <property type="molecule type" value="mRNA"/>
</dbReference>
<dbReference type="EMBL" id="AK085368">
    <property type="protein sequence ID" value="BAC39433.1"/>
    <property type="molecule type" value="mRNA"/>
</dbReference>
<dbReference type="EMBL" id="BC013492">
    <property type="protein sequence ID" value="AAH13492.1"/>
    <property type="molecule type" value="mRNA"/>
</dbReference>
<dbReference type="EMBL" id="BC031115">
    <property type="protein sequence ID" value="AAH31115.1"/>
    <property type="molecule type" value="mRNA"/>
</dbReference>
<dbReference type="CCDS" id="CCDS28173.1"/>
<dbReference type="RefSeq" id="NP_001272722.1">
    <property type="nucleotide sequence ID" value="NM_001285793.1"/>
</dbReference>
<dbReference type="RefSeq" id="NP_062778.2">
    <property type="nucleotide sequence ID" value="NM_019804.4"/>
</dbReference>
<dbReference type="RefSeq" id="XP_006522462.1">
    <property type="nucleotide sequence ID" value="XM_006522399.5"/>
</dbReference>
<dbReference type="SMR" id="Q9JJ04"/>
<dbReference type="FunCoup" id="Q9JJ04">
    <property type="interactions" value="1457"/>
</dbReference>
<dbReference type="STRING" id="10090.ENSMUSP00000023482"/>
<dbReference type="CAZy" id="GT7">
    <property type="family name" value="Glycosyltransferase Family 7"/>
</dbReference>
<dbReference type="GlyCosmos" id="Q9JJ04">
    <property type="glycosylation" value="2 sites, No reported glycans"/>
</dbReference>
<dbReference type="GlyGen" id="Q9JJ04">
    <property type="glycosylation" value="2 sites"/>
</dbReference>
<dbReference type="iPTMnet" id="Q9JJ04"/>
<dbReference type="PhosphoSitePlus" id="Q9JJ04"/>
<dbReference type="PaxDb" id="10090-ENSMUSP00000023482"/>
<dbReference type="ProteomicsDB" id="273526"/>
<dbReference type="Antibodypedia" id="32692">
    <property type="antibodies" value="214 antibodies from 27 providers"/>
</dbReference>
<dbReference type="DNASU" id="56375"/>
<dbReference type="Ensembl" id="ENSMUST00000023482.13">
    <property type="protein sequence ID" value="ENSMUSP00000023482.7"/>
    <property type="gene ID" value="ENSMUSG00000022793.18"/>
</dbReference>
<dbReference type="Ensembl" id="ENSMUST00000114712.8">
    <property type="protein sequence ID" value="ENSMUSP00000110360.2"/>
    <property type="gene ID" value="ENSMUSG00000022793.18"/>
</dbReference>
<dbReference type="GeneID" id="56375"/>
<dbReference type="KEGG" id="mmu:56375"/>
<dbReference type="UCSC" id="uc007zfi.3">
    <property type="organism name" value="mouse"/>
</dbReference>
<dbReference type="AGR" id="MGI:1928387"/>
<dbReference type="CTD" id="8702"/>
<dbReference type="MGI" id="MGI:1928387">
    <property type="gene designation" value="B4galt4"/>
</dbReference>
<dbReference type="VEuPathDB" id="HostDB:ENSMUSG00000022793"/>
<dbReference type="eggNOG" id="KOG3916">
    <property type="taxonomic scope" value="Eukaryota"/>
</dbReference>
<dbReference type="GeneTree" id="ENSGT00940000158378"/>
<dbReference type="HOGENOM" id="CLU_044391_1_0_1"/>
<dbReference type="InParanoid" id="Q9JJ04"/>
<dbReference type="OMA" id="TSNYFVD"/>
<dbReference type="OrthoDB" id="10016069at2759"/>
<dbReference type="PhylomeDB" id="Q9JJ04"/>
<dbReference type="TreeFam" id="TF312834"/>
<dbReference type="Reactome" id="R-MMU-2022854">
    <property type="pathway name" value="Keratan sulfate biosynthesis"/>
</dbReference>
<dbReference type="Reactome" id="R-MMU-975577">
    <property type="pathway name" value="N-Glycan antennae elongation"/>
</dbReference>
<dbReference type="UniPathway" id="UPA00378"/>
<dbReference type="BioGRID-ORCS" id="56375">
    <property type="hits" value="4 hits in 79 CRISPR screens"/>
</dbReference>
<dbReference type="ChiTaRS" id="B4galt4">
    <property type="organism name" value="mouse"/>
</dbReference>
<dbReference type="PRO" id="PR:Q9JJ04"/>
<dbReference type="Proteomes" id="UP000000589">
    <property type="component" value="Chromosome 16"/>
</dbReference>
<dbReference type="RNAct" id="Q9JJ04">
    <property type="molecule type" value="protein"/>
</dbReference>
<dbReference type="Bgee" id="ENSMUSG00000022793">
    <property type="expression patterns" value="Expressed in animal zygote and 212 other cell types or tissues"/>
</dbReference>
<dbReference type="ExpressionAtlas" id="Q9JJ04">
    <property type="expression patterns" value="baseline and differential"/>
</dbReference>
<dbReference type="GO" id="GO:0005576">
    <property type="term" value="C:extracellular region"/>
    <property type="evidence" value="ECO:0007669"/>
    <property type="project" value="UniProtKB-SubCell"/>
</dbReference>
<dbReference type="GO" id="GO:0000139">
    <property type="term" value="C:Golgi membrane"/>
    <property type="evidence" value="ECO:0000250"/>
    <property type="project" value="UniProtKB"/>
</dbReference>
<dbReference type="GO" id="GO:0046872">
    <property type="term" value="F:metal ion binding"/>
    <property type="evidence" value="ECO:0007669"/>
    <property type="project" value="UniProtKB-KW"/>
</dbReference>
<dbReference type="GO" id="GO:0003945">
    <property type="term" value="F:N-acetyllactosamine synthase activity"/>
    <property type="evidence" value="ECO:0000250"/>
    <property type="project" value="UniProtKB"/>
</dbReference>
<dbReference type="GO" id="GO:0035250">
    <property type="term" value="F:UDP-galactosyltransferase activity"/>
    <property type="evidence" value="ECO:0000250"/>
    <property type="project" value="UniProtKB"/>
</dbReference>
<dbReference type="GO" id="GO:0005975">
    <property type="term" value="P:carbohydrate metabolic process"/>
    <property type="evidence" value="ECO:0007669"/>
    <property type="project" value="InterPro"/>
</dbReference>
<dbReference type="GO" id="GO:0018146">
    <property type="term" value="P:keratan sulfate proteoglycan biosynthetic process"/>
    <property type="evidence" value="ECO:0000250"/>
    <property type="project" value="UniProtKB"/>
</dbReference>
<dbReference type="GO" id="GO:0001572">
    <property type="term" value="P:lactosylceramide biosynthetic process"/>
    <property type="evidence" value="ECO:0000250"/>
    <property type="project" value="UniProtKB"/>
</dbReference>
<dbReference type="GO" id="GO:0006486">
    <property type="term" value="P:protein glycosylation"/>
    <property type="evidence" value="ECO:0007669"/>
    <property type="project" value="UniProtKB-UniPathway"/>
</dbReference>
<dbReference type="CDD" id="cd00899">
    <property type="entry name" value="b4GalT"/>
    <property type="match status" value="1"/>
</dbReference>
<dbReference type="FunFam" id="3.90.550.10:FF:000028">
    <property type="entry name" value="beta-1,4-galactosyltransferase 1"/>
    <property type="match status" value="1"/>
</dbReference>
<dbReference type="Gene3D" id="3.90.550.10">
    <property type="entry name" value="Spore Coat Polysaccharide Biosynthesis Protein SpsA, Chain A"/>
    <property type="match status" value="1"/>
</dbReference>
<dbReference type="InterPro" id="IPR003859">
    <property type="entry name" value="Galactosyl_T"/>
</dbReference>
<dbReference type="InterPro" id="IPR027791">
    <property type="entry name" value="Galactosyl_T_C"/>
</dbReference>
<dbReference type="InterPro" id="IPR027995">
    <property type="entry name" value="Galactosyl_T_N"/>
</dbReference>
<dbReference type="InterPro" id="IPR029044">
    <property type="entry name" value="Nucleotide-diphossugar_trans"/>
</dbReference>
<dbReference type="PANTHER" id="PTHR19300">
    <property type="entry name" value="BETA-1,4-GALACTOSYLTRANSFERASE"/>
    <property type="match status" value="1"/>
</dbReference>
<dbReference type="PANTHER" id="PTHR19300:SF9">
    <property type="entry name" value="BETA-1,4-GALACTOSYLTRANSFERASE 4"/>
    <property type="match status" value="1"/>
</dbReference>
<dbReference type="Pfam" id="PF02709">
    <property type="entry name" value="Glyco_transf_7C"/>
    <property type="match status" value="1"/>
</dbReference>
<dbReference type="Pfam" id="PF13733">
    <property type="entry name" value="Glyco_transf_7N"/>
    <property type="match status" value="1"/>
</dbReference>
<dbReference type="PRINTS" id="PR02050">
    <property type="entry name" value="B14GALTRFASE"/>
</dbReference>
<dbReference type="SUPFAM" id="SSF53448">
    <property type="entry name" value="Nucleotide-diphospho-sugar transferases"/>
    <property type="match status" value="1"/>
</dbReference>
<feature type="chain" id="PRO_0000080543" description="Beta-1,4-galactosyltransferase 4">
    <location>
        <begin position="1"/>
        <end position="344"/>
    </location>
</feature>
<feature type="topological domain" description="Cytoplasmic" evidence="3">
    <location>
        <begin position="1"/>
        <end position="12"/>
    </location>
</feature>
<feature type="transmembrane region" description="Helical; Signal-anchor for type II membrane protein" evidence="3">
    <location>
        <begin position="13"/>
        <end position="38"/>
    </location>
</feature>
<feature type="topological domain" description="Lumenal" evidence="3">
    <location>
        <begin position="39"/>
        <end position="344"/>
    </location>
</feature>
<feature type="binding site" evidence="1">
    <location>
        <begin position="129"/>
        <end position="133"/>
    </location>
    <ligand>
        <name>UDP-alpha-D-galactose</name>
        <dbReference type="ChEBI" id="CHEBI:66914"/>
    </ligand>
</feature>
<feature type="binding site" evidence="1">
    <location>
        <begin position="168"/>
        <end position="170"/>
    </location>
    <ligand>
        <name>UDP-alpha-D-galactose</name>
        <dbReference type="ChEBI" id="CHEBI:66914"/>
    </ligand>
</feature>
<feature type="binding site" evidence="1">
    <location>
        <begin position="195"/>
        <end position="196"/>
    </location>
    <ligand>
        <name>UDP-alpha-D-galactose</name>
        <dbReference type="ChEBI" id="CHEBI:66914"/>
    </ligand>
</feature>
<feature type="binding site" evidence="1">
    <location>
        <position position="196"/>
    </location>
    <ligand>
        <name>Mn(2+)</name>
        <dbReference type="ChEBI" id="CHEBI:29035"/>
    </ligand>
</feature>
<feature type="binding site" evidence="1">
    <location>
        <position position="224"/>
    </location>
    <ligand>
        <name>UDP-alpha-D-galactose</name>
        <dbReference type="ChEBI" id="CHEBI:66914"/>
    </ligand>
</feature>
<feature type="binding site" evidence="1">
    <location>
        <position position="256"/>
    </location>
    <ligand>
        <name>UDP-alpha-D-galactose</name>
        <dbReference type="ChEBI" id="CHEBI:66914"/>
    </ligand>
</feature>
<feature type="binding site" evidence="1">
    <location>
        <begin position="258"/>
        <end position="261"/>
    </location>
    <ligand>
        <name>N-acetyl-D-glucosamine</name>
        <dbReference type="ChEBI" id="CHEBI:506227"/>
    </ligand>
</feature>
<feature type="binding site" evidence="1">
    <location>
        <begin position="289"/>
        <end position="291"/>
    </location>
    <ligand>
        <name>UDP-alpha-D-galactose</name>
        <dbReference type="ChEBI" id="CHEBI:66914"/>
    </ligand>
</feature>
<feature type="binding site" evidence="1">
    <location>
        <position position="289"/>
    </location>
    <ligand>
        <name>Mn(2+)</name>
        <dbReference type="ChEBI" id="CHEBI:29035"/>
    </ligand>
</feature>
<feature type="binding site" evidence="1">
    <location>
        <position position="301"/>
    </location>
    <ligand>
        <name>N-acetyl-D-glucosamine</name>
        <dbReference type="ChEBI" id="CHEBI:506227"/>
    </ligand>
</feature>
<feature type="glycosylation site" description="N-linked (GlcNAc...) asparagine" evidence="3">
    <location>
        <position position="220"/>
    </location>
</feature>
<feature type="glycosylation site" description="N-linked (GlcNAc...) asparagine" evidence="3">
    <location>
        <position position="335"/>
    </location>
</feature>
<feature type="disulfide bond" evidence="1">
    <location>
        <begin position="77"/>
        <end position="118"/>
    </location>
</feature>
<feature type="disulfide bond" evidence="1">
    <location>
        <begin position="189"/>
        <end position="208"/>
    </location>
</feature>
<feature type="sequence conflict" description="In Ref. 1; AAF22222." evidence="4" ref="1">
    <original>L</original>
    <variation>F</variation>
    <location>
        <position position="238"/>
    </location>
</feature>